<dbReference type="EMBL" id="CP001657">
    <property type="protein sequence ID" value="ACT14451.1"/>
    <property type="molecule type" value="Genomic_DNA"/>
</dbReference>
<dbReference type="RefSeq" id="WP_005974793.1">
    <property type="nucleotide sequence ID" value="NC_012917.1"/>
</dbReference>
<dbReference type="SMR" id="C6DE15"/>
<dbReference type="STRING" id="561230.PC1_3435"/>
<dbReference type="GeneID" id="93391601"/>
<dbReference type="KEGG" id="pct:PC1_3435"/>
<dbReference type="eggNOG" id="COG0360">
    <property type="taxonomic scope" value="Bacteria"/>
</dbReference>
<dbReference type="HOGENOM" id="CLU_113441_6_1_6"/>
<dbReference type="OrthoDB" id="9812702at2"/>
<dbReference type="Proteomes" id="UP000002736">
    <property type="component" value="Chromosome"/>
</dbReference>
<dbReference type="GO" id="GO:0022627">
    <property type="term" value="C:cytosolic small ribosomal subunit"/>
    <property type="evidence" value="ECO:0007669"/>
    <property type="project" value="TreeGrafter"/>
</dbReference>
<dbReference type="GO" id="GO:0070181">
    <property type="term" value="F:small ribosomal subunit rRNA binding"/>
    <property type="evidence" value="ECO:0007669"/>
    <property type="project" value="TreeGrafter"/>
</dbReference>
<dbReference type="GO" id="GO:0003735">
    <property type="term" value="F:structural constituent of ribosome"/>
    <property type="evidence" value="ECO:0007669"/>
    <property type="project" value="InterPro"/>
</dbReference>
<dbReference type="GO" id="GO:0006412">
    <property type="term" value="P:translation"/>
    <property type="evidence" value="ECO:0007669"/>
    <property type="project" value="UniProtKB-UniRule"/>
</dbReference>
<dbReference type="CDD" id="cd00473">
    <property type="entry name" value="bS6"/>
    <property type="match status" value="1"/>
</dbReference>
<dbReference type="FunFam" id="3.30.70.60:FF:000003">
    <property type="entry name" value="30S ribosomal protein S6"/>
    <property type="match status" value="1"/>
</dbReference>
<dbReference type="Gene3D" id="3.30.70.60">
    <property type="match status" value="1"/>
</dbReference>
<dbReference type="HAMAP" id="MF_00360">
    <property type="entry name" value="Ribosomal_bS6"/>
    <property type="match status" value="1"/>
</dbReference>
<dbReference type="InterPro" id="IPR000529">
    <property type="entry name" value="Ribosomal_bS6"/>
</dbReference>
<dbReference type="InterPro" id="IPR020815">
    <property type="entry name" value="Ribosomal_bS6_CS"/>
</dbReference>
<dbReference type="InterPro" id="IPR035980">
    <property type="entry name" value="Ribosomal_bS6_sf"/>
</dbReference>
<dbReference type="InterPro" id="IPR020814">
    <property type="entry name" value="Ribosomal_S6_plastid/chlpt"/>
</dbReference>
<dbReference type="InterPro" id="IPR014717">
    <property type="entry name" value="Transl_elong_EF1B/ribsomal_bS6"/>
</dbReference>
<dbReference type="NCBIfam" id="TIGR00166">
    <property type="entry name" value="S6"/>
    <property type="match status" value="1"/>
</dbReference>
<dbReference type="PANTHER" id="PTHR21011">
    <property type="entry name" value="MITOCHONDRIAL 28S RIBOSOMAL PROTEIN S6"/>
    <property type="match status" value="1"/>
</dbReference>
<dbReference type="PANTHER" id="PTHR21011:SF1">
    <property type="entry name" value="SMALL RIBOSOMAL SUBUNIT PROTEIN BS6M"/>
    <property type="match status" value="1"/>
</dbReference>
<dbReference type="Pfam" id="PF01250">
    <property type="entry name" value="Ribosomal_S6"/>
    <property type="match status" value="1"/>
</dbReference>
<dbReference type="SUPFAM" id="SSF54995">
    <property type="entry name" value="Ribosomal protein S6"/>
    <property type="match status" value="1"/>
</dbReference>
<dbReference type="PROSITE" id="PS01048">
    <property type="entry name" value="RIBOSOMAL_S6"/>
    <property type="match status" value="1"/>
</dbReference>
<evidence type="ECO:0000255" key="1">
    <source>
        <dbReference type="HAMAP-Rule" id="MF_00360"/>
    </source>
</evidence>
<evidence type="ECO:0000256" key="2">
    <source>
        <dbReference type="SAM" id="MobiDB-lite"/>
    </source>
</evidence>
<evidence type="ECO:0000305" key="3"/>
<comment type="function">
    <text evidence="1">Binds together with bS18 to 16S ribosomal RNA.</text>
</comment>
<comment type="similarity">
    <text evidence="1">Belongs to the bacterial ribosomal protein bS6 family.</text>
</comment>
<organism>
    <name type="scientific">Pectobacterium carotovorum subsp. carotovorum (strain PC1)</name>
    <dbReference type="NCBI Taxonomy" id="561230"/>
    <lineage>
        <taxon>Bacteria</taxon>
        <taxon>Pseudomonadati</taxon>
        <taxon>Pseudomonadota</taxon>
        <taxon>Gammaproteobacteria</taxon>
        <taxon>Enterobacterales</taxon>
        <taxon>Pectobacteriaceae</taxon>
        <taxon>Pectobacterium</taxon>
    </lineage>
</organism>
<accession>C6DE15</accession>
<proteinExistence type="inferred from homology"/>
<sequence>MRHYEIVFMVHPDQSEQVPGMIERYTATITGAQGTIHRLEDWGRRQLAYPINKLHKAHYVLLNVEAPQEAIDELETNFRFNDAVIRSMVMRVKHAVTEASPMVKAKDERRERREDFAEAGDDVDAGDSEE</sequence>
<feature type="chain" id="PRO_1000205403" description="Small ribosomal subunit protein bS6">
    <location>
        <begin position="1"/>
        <end position="130"/>
    </location>
</feature>
<feature type="region of interest" description="Disordered" evidence="2">
    <location>
        <begin position="100"/>
        <end position="130"/>
    </location>
</feature>
<feature type="compositionally biased region" description="Basic and acidic residues" evidence="2">
    <location>
        <begin position="104"/>
        <end position="116"/>
    </location>
</feature>
<feature type="compositionally biased region" description="Acidic residues" evidence="2">
    <location>
        <begin position="117"/>
        <end position="130"/>
    </location>
</feature>
<keyword id="KW-0687">Ribonucleoprotein</keyword>
<keyword id="KW-0689">Ribosomal protein</keyword>
<keyword id="KW-0694">RNA-binding</keyword>
<keyword id="KW-0699">rRNA-binding</keyword>
<reference key="1">
    <citation type="submission" date="2009-07" db="EMBL/GenBank/DDBJ databases">
        <title>Complete sequence of Pectobacterium carotovorum subsp. carotovorum PC1.</title>
        <authorList>
            <consortium name="US DOE Joint Genome Institute"/>
            <person name="Lucas S."/>
            <person name="Copeland A."/>
            <person name="Lapidus A."/>
            <person name="Glavina del Rio T."/>
            <person name="Tice H."/>
            <person name="Bruce D."/>
            <person name="Goodwin L."/>
            <person name="Pitluck S."/>
            <person name="Munk A.C."/>
            <person name="Brettin T."/>
            <person name="Detter J.C."/>
            <person name="Han C."/>
            <person name="Tapia R."/>
            <person name="Larimer F."/>
            <person name="Land M."/>
            <person name="Hauser L."/>
            <person name="Kyrpides N."/>
            <person name="Mikhailova N."/>
            <person name="Balakrishnan V."/>
            <person name="Glasner J."/>
            <person name="Perna N.T."/>
        </authorList>
    </citation>
    <scope>NUCLEOTIDE SEQUENCE [LARGE SCALE GENOMIC DNA]</scope>
    <source>
        <strain>PC1</strain>
    </source>
</reference>
<protein>
    <recommendedName>
        <fullName evidence="1">Small ribosomal subunit protein bS6</fullName>
    </recommendedName>
    <alternativeName>
        <fullName evidence="3">30S ribosomal protein S6</fullName>
    </alternativeName>
</protein>
<gene>
    <name evidence="1" type="primary">rpsF</name>
    <name type="ordered locus">PC1_3435</name>
</gene>
<name>RS6_PECCP</name>